<evidence type="ECO:0000255" key="1"/>
<evidence type="ECO:0000255" key="2">
    <source>
        <dbReference type="PROSITE-ProRule" id="PRU00297"/>
    </source>
</evidence>
<evidence type="ECO:0000269" key="3">
    <source>
    </source>
</evidence>
<evidence type="ECO:0000269" key="4">
    <source>
    </source>
</evidence>
<evidence type="ECO:0000269" key="5">
    <source>
    </source>
</evidence>
<evidence type="ECO:0000305" key="6"/>
<evidence type="ECO:0007829" key="7">
    <source>
        <dbReference type="PDB" id="1QPA"/>
    </source>
</evidence>
<proteinExistence type="evidence at protein level"/>
<comment type="function">
    <text evidence="4">Depolymerization of lignin. Catalyzes the C(alpha)-C(beta) cleavage of the propyl side chains of lignin.</text>
</comment>
<comment type="catalytic activity">
    <reaction evidence="4">
        <text>1-(3,4-dimethoxyphenyl)-2-(2-methoxyphenoxy)propane-1,3-diol + H2O2 = 3,4-dimethoxybenzaldehyde + guaiacol + glycolaldehyde + H2O</text>
        <dbReference type="Rhea" id="RHEA:48004"/>
        <dbReference type="ChEBI" id="CHEBI:15377"/>
        <dbReference type="ChEBI" id="CHEBI:16240"/>
        <dbReference type="ChEBI" id="CHEBI:17071"/>
        <dbReference type="ChEBI" id="CHEBI:17098"/>
        <dbReference type="ChEBI" id="CHEBI:28591"/>
        <dbReference type="ChEBI" id="CHEBI:86963"/>
        <dbReference type="EC" id="1.11.1.14"/>
    </reaction>
</comment>
<comment type="catalytic activity">
    <reaction evidence="4">
        <text>2 (3,4-dimethoxyphenyl)methanol + H2O2 = 2 (3,4-dimethoxyphenyl)methanol radical + 2 H2O</text>
        <dbReference type="Rhea" id="RHEA:30271"/>
        <dbReference type="ChEBI" id="CHEBI:15377"/>
        <dbReference type="ChEBI" id="CHEBI:16240"/>
        <dbReference type="ChEBI" id="CHEBI:62150"/>
        <dbReference type="ChEBI" id="CHEBI:88143"/>
        <dbReference type="EC" id="1.11.1.14"/>
    </reaction>
</comment>
<comment type="cofactor">
    <cofactor evidence="2">
        <name>heme b</name>
        <dbReference type="ChEBI" id="CHEBI:60344"/>
    </cofactor>
    <text evidence="2">Binds 1 heme b (iron(II)-protoporphyrin IX) group per subunit.</text>
</comment>
<comment type="cofactor">
    <cofactor>
        <name>Ca(2+)</name>
        <dbReference type="ChEBI" id="CHEBI:29108"/>
    </cofactor>
    <text>Binds 2 calcium ions per subunit.</text>
</comment>
<comment type="biophysicochemical properties">
    <kinetics>
        <KM evidence="4">85 uM for H(2)O(2)</KM>
        <KM evidence="4">171 uM for (3,4-dimethoxyphenyl)methanol</KM>
    </kinetics>
    <phDependence>
        <text evidence="4">Optimum pH is 2.3.</text>
    </phDependence>
</comment>
<comment type="pathway">
    <text>Secondary metabolite metabolism; lignin degradation.</text>
</comment>
<comment type="developmental stage">
    <text>Ligninases are expressed during secondary metabolism, and are triggered by nutrient limitation.</text>
</comment>
<comment type="similarity">
    <text evidence="6">Belongs to the peroxidase family. Ligninase subfamily.</text>
</comment>
<keyword id="KW-0002">3D-structure</keyword>
<keyword id="KW-0106">Calcium</keyword>
<keyword id="KW-0165">Cleavage on pair of basic residues</keyword>
<keyword id="KW-0903">Direct protein sequencing</keyword>
<keyword id="KW-1015">Disulfide bond</keyword>
<keyword id="KW-0325">Glycoprotein</keyword>
<keyword id="KW-0349">Heme</keyword>
<keyword id="KW-0376">Hydrogen peroxide</keyword>
<keyword id="KW-0408">Iron</keyword>
<keyword id="KW-0439">Lignin degradation</keyword>
<keyword id="KW-0479">Metal-binding</keyword>
<keyword id="KW-0560">Oxidoreductase</keyword>
<keyword id="KW-0575">Peroxidase</keyword>
<keyword id="KW-0732">Signal</keyword>
<keyword id="KW-0865">Zymogen</keyword>
<name>LIG4_PHACH</name>
<reference key="1">
    <citation type="submission" date="1989-06" db="EMBL/GenBank/DDBJ databases">
        <authorList>
            <person name="Naidu P.S."/>
            <person name="Zhang Y.Z."/>
            <person name="Reddy C.A."/>
        </authorList>
    </citation>
    <scope>NUCLEOTIDE SEQUENCE [GENOMIC DNA]</scope>
    <source>
        <strain>ATCC 24725 / DSM 6909 / CBS 481.73 / BCRC 36200 / NRRL 6361 / VKM F-1767</strain>
    </source>
</reference>
<reference key="2">
    <citation type="journal article" date="1987" name="Gene">
        <title>Analysis of nucleotide sequences of two ligninase cDNAs from a white-rot filamentous fungus, Phanerochaete chrysosporium.</title>
        <authorList>
            <person name="de Boer H.A."/>
            <person name="Zhang Y.Z."/>
            <person name="Collins C."/>
            <person name="Reddy C.A."/>
        </authorList>
    </citation>
    <scope>NUCLEOTIDE SEQUENCE [MRNA]</scope>
</reference>
<reference key="3">
    <citation type="journal article" date="1988" name="Gene">
        <title>Molecular analysis of a Phanerochaete chrysosporium lignin peroxidase gene.</title>
        <authorList>
            <person name="Walther L."/>
            <person name="Kaelin M."/>
            <person name="Reiser J."/>
            <person name="Suter F."/>
            <person name="Fritsche B."/>
            <person name="Saloheimo M."/>
            <person name="Leisola M."/>
            <person name="Teeri T."/>
            <person name="Knowles J.K.C."/>
            <person name="Fiechter A."/>
        </authorList>
    </citation>
    <scope>PROTEIN SEQUENCE OF 29-60</scope>
    <scope>FUNCTION</scope>
    <scope>CATALYTIC ACTIVITY</scope>
    <scope>BIOPHYSICOCHEMICAL PROPERTIES</scope>
</reference>
<reference key="4">
    <citation type="journal article" date="1990" name="Eur. J. Biochem.">
        <title>Lignin peroxidase from Phanerochaete chrysosporium. Molecular and kinetic characterization of isozymes.</title>
        <authorList>
            <person name="Glumoff T."/>
            <person name="Harvey P.J."/>
            <person name="Molinari S."/>
            <person name="Goble M."/>
            <person name="Frank G."/>
            <person name="Palmer J.M."/>
            <person name="Smit J.D.G."/>
            <person name="Leisola M.S.A."/>
        </authorList>
    </citation>
    <scope>PROTEIN SEQUENCE OF 29-59</scope>
    <source>
        <strain>ATCC 24725 / DSM 6909 / CBS 481.73 / BCRC 36200 / NRRL 6361 / VKM F-1767</strain>
    </source>
</reference>
<reference key="5">
    <citation type="journal article" date="1994" name="Bioorg. Med. Chem.">
        <title>Do carbohydrates play a role in the lignin peroxidase cycle? Redox catalysis in the endergonic region of the driving force.</title>
        <authorList>
            <person name="Schoemaker H.E."/>
            <person name="Lundell T.K."/>
            <person name="Floris R."/>
            <person name="Glumoff T."/>
            <person name="Winterhalter K.H."/>
            <person name="Piontek K."/>
        </authorList>
    </citation>
    <scope>X-RAY CRYSTALLOGRAPHY (1.8 ANGSTROMS) OF 29-372</scope>
    <scope>GLYCOSYLATION AT ASN-286</scope>
</reference>
<gene>
    <name type="primary">GLG4</name>
    <name type="synonym">LIP2</name>
</gene>
<accession>P11542</accession>
<accession>P14153</accession>
<feature type="signal peptide" evidence="1">
    <location>
        <begin position="1"/>
        <end position="21"/>
    </location>
</feature>
<feature type="propeptide" id="PRO_0000023766" evidence="3 4">
    <location>
        <begin position="22"/>
        <end position="28"/>
    </location>
</feature>
<feature type="chain" id="PRO_0000023767" description="Ligninase H2">
    <location>
        <begin position="29"/>
        <end position="372"/>
    </location>
</feature>
<feature type="active site" description="Proton acceptor">
    <location>
        <position position="76"/>
    </location>
</feature>
<feature type="binding site">
    <location>
        <position position="77"/>
    </location>
    <ligand>
        <name>Ca(2+)</name>
        <dbReference type="ChEBI" id="CHEBI:29108"/>
        <label>1</label>
    </ligand>
</feature>
<feature type="binding site">
    <location>
        <position position="95"/>
    </location>
    <ligand>
        <name>Ca(2+)</name>
        <dbReference type="ChEBI" id="CHEBI:29108"/>
        <label>1</label>
    </ligand>
</feature>
<feature type="binding site">
    <location>
        <position position="97"/>
    </location>
    <ligand>
        <name>Ca(2+)</name>
        <dbReference type="ChEBI" id="CHEBI:29108"/>
        <label>1</label>
    </ligand>
</feature>
<feature type="binding site">
    <location>
        <position position="99"/>
    </location>
    <ligand>
        <name>Ca(2+)</name>
        <dbReference type="ChEBI" id="CHEBI:29108"/>
        <label>1</label>
    </ligand>
</feature>
<feature type="binding site" description="axial binding residue">
    <location>
        <position position="205"/>
    </location>
    <ligand>
        <name>heme b</name>
        <dbReference type="ChEBI" id="CHEBI:60344"/>
    </ligand>
    <ligandPart>
        <name>Fe</name>
        <dbReference type="ChEBI" id="CHEBI:18248"/>
    </ligandPart>
</feature>
<feature type="binding site">
    <location>
        <position position="206"/>
    </location>
    <ligand>
        <name>Ca(2+)</name>
        <dbReference type="ChEBI" id="CHEBI:29108"/>
        <label>2</label>
    </ligand>
</feature>
<feature type="binding site">
    <location>
        <position position="223"/>
    </location>
    <ligand>
        <name>Ca(2+)</name>
        <dbReference type="ChEBI" id="CHEBI:29108"/>
        <label>2</label>
    </ligand>
</feature>
<feature type="binding site">
    <location>
        <position position="225"/>
    </location>
    <ligand>
        <name>Ca(2+)</name>
        <dbReference type="ChEBI" id="CHEBI:29108"/>
        <label>2</label>
    </ligand>
</feature>
<feature type="binding site">
    <location>
        <position position="228"/>
    </location>
    <ligand>
        <name>Ca(2+)</name>
        <dbReference type="ChEBI" id="CHEBI:29108"/>
        <label>2</label>
    </ligand>
</feature>
<feature type="binding site">
    <location>
        <position position="230"/>
    </location>
    <ligand>
        <name>Ca(2+)</name>
        <dbReference type="ChEBI" id="CHEBI:29108"/>
        <label>2</label>
    </ligand>
</feature>
<feature type="site" description="Transition state stabilizer">
    <location>
        <position position="72"/>
    </location>
</feature>
<feature type="glycosylation site" description="N-linked (GlcNAc...) asparagine" evidence="5">
    <location>
        <position position="286"/>
    </location>
</feature>
<feature type="disulfide bond">
    <location>
        <begin position="31"/>
        <end position="44"/>
    </location>
</feature>
<feature type="disulfide bond">
    <location>
        <begin position="43"/>
        <end position="314"/>
    </location>
</feature>
<feature type="disulfide bond">
    <location>
        <begin position="63"/>
        <end position="149"/>
    </location>
</feature>
<feature type="disulfide bond">
    <location>
        <begin position="278"/>
        <end position="344"/>
    </location>
</feature>
<feature type="sequence conflict" description="In Ref. 2; AAA33733." evidence="6" ref="2">
    <original>T</original>
    <variation>I</variation>
    <location>
        <position position="312"/>
    </location>
</feature>
<feature type="helix" evidence="7">
    <location>
        <begin position="41"/>
        <end position="46"/>
    </location>
</feature>
<feature type="helix" evidence="7">
    <location>
        <begin position="47"/>
        <end position="56"/>
    </location>
</feature>
<feature type="turn" evidence="7">
    <location>
        <begin position="59"/>
        <end position="61"/>
    </location>
</feature>
<feature type="helix" evidence="7">
    <location>
        <begin position="65"/>
        <end position="78"/>
    </location>
</feature>
<feature type="helix" evidence="7">
    <location>
        <begin position="83"/>
        <end position="87"/>
    </location>
</feature>
<feature type="strand" evidence="7">
    <location>
        <begin position="95"/>
        <end position="98"/>
    </location>
</feature>
<feature type="helix" evidence="7">
    <location>
        <begin position="99"/>
        <end position="102"/>
    </location>
</feature>
<feature type="helix" evidence="7">
    <location>
        <begin position="104"/>
        <end position="107"/>
    </location>
</feature>
<feature type="helix" evidence="7">
    <location>
        <begin position="111"/>
        <end position="113"/>
    </location>
</feature>
<feature type="helix" evidence="7">
    <location>
        <begin position="116"/>
        <end position="130"/>
    </location>
</feature>
<feature type="helix" evidence="7">
    <location>
        <begin position="134"/>
        <end position="147"/>
    </location>
</feature>
<feature type="helix" evidence="7">
    <location>
        <begin position="180"/>
        <end position="191"/>
    </location>
</feature>
<feature type="helix" evidence="7">
    <location>
        <begin position="195"/>
        <end position="199"/>
    </location>
</feature>
<feature type="helix" evidence="7">
    <location>
        <begin position="202"/>
        <end position="206"/>
    </location>
</feature>
<feature type="strand" evidence="7">
    <location>
        <begin position="209"/>
        <end position="214"/>
    </location>
</feature>
<feature type="strand" evidence="7">
    <location>
        <begin position="220"/>
        <end position="224"/>
    </location>
</feature>
<feature type="helix" evidence="7">
    <location>
        <begin position="232"/>
        <end position="236"/>
    </location>
</feature>
<feature type="strand" evidence="7">
    <location>
        <begin position="245"/>
        <end position="247"/>
    </location>
</feature>
<feature type="strand" evidence="7">
    <location>
        <begin position="256"/>
        <end position="259"/>
    </location>
</feature>
<feature type="helix" evidence="7">
    <location>
        <begin position="265"/>
        <end position="272"/>
    </location>
</feature>
<feature type="turn" evidence="7">
    <location>
        <begin position="274"/>
        <end position="276"/>
    </location>
</feature>
<feature type="helix" evidence="7">
    <location>
        <begin position="277"/>
        <end position="281"/>
    </location>
</feature>
<feature type="turn" evidence="7">
    <location>
        <begin position="282"/>
        <end position="285"/>
    </location>
</feature>
<feature type="helix" evidence="7">
    <location>
        <begin position="287"/>
        <end position="302"/>
    </location>
</feature>
<feature type="turn" evidence="7">
    <location>
        <begin position="303"/>
        <end position="305"/>
    </location>
</feature>
<feature type="helix" evidence="7">
    <location>
        <begin position="308"/>
        <end position="310"/>
    </location>
</feature>
<feature type="strand" evidence="7">
    <location>
        <begin position="311"/>
        <end position="313"/>
    </location>
</feature>
<feature type="helix" evidence="7">
    <location>
        <begin position="315"/>
        <end position="317"/>
    </location>
</feature>
<feature type="helix" evidence="7">
    <location>
        <begin position="337"/>
        <end position="339"/>
    </location>
</feature>
<feature type="strand" evidence="7">
    <location>
        <begin position="345"/>
        <end position="347"/>
    </location>
</feature>
<feature type="strand" evidence="7">
    <location>
        <begin position="356"/>
        <end position="359"/>
    </location>
</feature>
<sequence>MAFKQLLAALSVALTLQVTQAAPNLDKRVACPDGVHTASNAACCAWFPVLDDIQQNLFHGGQCGAEAHEALRMVFHDSIAISPKLQSQGKFGGGGADGSIITFSSIETTYHPNIGLDEVVAIQKPFIAKHGVTRGDFIAFAGAVGVSNCPGAPQMQFFLGRPEATQAAPDGLVPEPFHTIDQVLARMLDAGGFDEIETVWLLSAHSIAAANDVDPTISGLPFDSTPGQFDSQFFVETQLRGTAFPGKTGIQGTVMSPLKGEMRLQTDHLFARDSRTACEWQSFVNNQTKLQEDFQFIFTALSTLGHDMNAMTDCSEVIPAPKPVNFGPSFFPAGKTHADIEQACASTPFPTLITAPGPSASVARIPPPPSPN</sequence>
<dbReference type="EC" id="1.11.1.14" evidence="4"/>
<dbReference type="EMBL" id="X15599">
    <property type="protein sequence ID" value="CAA33621.1"/>
    <property type="molecule type" value="Genomic_DNA"/>
</dbReference>
<dbReference type="EMBL" id="M18743">
    <property type="protein sequence ID" value="AAA33733.1"/>
    <property type="molecule type" value="mRNA"/>
</dbReference>
<dbReference type="PIR" id="S06043">
    <property type="entry name" value="OPJGH2"/>
</dbReference>
<dbReference type="PDB" id="1QPA">
    <property type="method" value="X-ray"/>
    <property type="resolution" value="1.80 A"/>
    <property type="chains" value="A/B=29-372"/>
</dbReference>
<dbReference type="PDBsum" id="1QPA"/>
<dbReference type="SMR" id="P11542"/>
<dbReference type="CAZy" id="AA2">
    <property type="family name" value="Auxiliary Activities 2"/>
</dbReference>
<dbReference type="PeroxiBase" id="2414">
    <property type="entry name" value="PcLiP04_BKMF1767"/>
</dbReference>
<dbReference type="GlyCosmos" id="P11542">
    <property type="glycosylation" value="1 site, No reported glycans"/>
</dbReference>
<dbReference type="iPTMnet" id="P11542"/>
<dbReference type="VEuPathDB" id="FungiDB:AGR57_11042"/>
<dbReference type="BioCyc" id="MetaCyc:MONOMER-14340"/>
<dbReference type="BRENDA" id="1.11.1.14">
    <property type="organism ID" value="1380"/>
</dbReference>
<dbReference type="UniPathway" id="UPA00892"/>
<dbReference type="EvolutionaryTrace" id="P11542"/>
<dbReference type="GO" id="GO:0016690">
    <property type="term" value="F:diarylpropane peroxidase activity"/>
    <property type="evidence" value="ECO:0007669"/>
    <property type="project" value="UniProtKB-EC"/>
</dbReference>
<dbReference type="GO" id="GO:0020037">
    <property type="term" value="F:heme binding"/>
    <property type="evidence" value="ECO:0007669"/>
    <property type="project" value="InterPro"/>
</dbReference>
<dbReference type="GO" id="GO:0046872">
    <property type="term" value="F:metal ion binding"/>
    <property type="evidence" value="ECO:0007669"/>
    <property type="project" value="UniProtKB-KW"/>
</dbReference>
<dbReference type="GO" id="GO:0034599">
    <property type="term" value="P:cellular response to oxidative stress"/>
    <property type="evidence" value="ECO:0007669"/>
    <property type="project" value="InterPro"/>
</dbReference>
<dbReference type="GO" id="GO:0042744">
    <property type="term" value="P:hydrogen peroxide catabolic process"/>
    <property type="evidence" value="ECO:0007669"/>
    <property type="project" value="UniProtKB-KW"/>
</dbReference>
<dbReference type="GO" id="GO:0046274">
    <property type="term" value="P:lignin catabolic process"/>
    <property type="evidence" value="ECO:0007669"/>
    <property type="project" value="UniProtKB-UniPathway"/>
</dbReference>
<dbReference type="GO" id="GO:0000302">
    <property type="term" value="P:response to reactive oxygen species"/>
    <property type="evidence" value="ECO:0007669"/>
    <property type="project" value="TreeGrafter"/>
</dbReference>
<dbReference type="CDD" id="cd00692">
    <property type="entry name" value="ligninase"/>
    <property type="match status" value="1"/>
</dbReference>
<dbReference type="Gene3D" id="1.10.520.10">
    <property type="match status" value="1"/>
</dbReference>
<dbReference type="Gene3D" id="1.10.420.10">
    <property type="entry name" value="Peroxidase, domain 2"/>
    <property type="match status" value="1"/>
</dbReference>
<dbReference type="InterPro" id="IPR044831">
    <property type="entry name" value="Ccp1-like"/>
</dbReference>
<dbReference type="InterPro" id="IPR002016">
    <property type="entry name" value="Haem_peroxidase"/>
</dbReference>
<dbReference type="InterPro" id="IPR010255">
    <property type="entry name" value="Haem_peroxidase_sf"/>
</dbReference>
<dbReference type="InterPro" id="IPR001621">
    <property type="entry name" value="Ligninase"/>
</dbReference>
<dbReference type="InterPro" id="IPR024589">
    <property type="entry name" value="Ligninase_C"/>
</dbReference>
<dbReference type="InterPro" id="IPR019794">
    <property type="entry name" value="Peroxidases_AS"/>
</dbReference>
<dbReference type="InterPro" id="IPR019793">
    <property type="entry name" value="Peroxidases_heam-ligand_BS"/>
</dbReference>
<dbReference type="PANTHER" id="PTHR31356:SF66">
    <property type="entry name" value="CATALASE-PEROXIDASE"/>
    <property type="match status" value="1"/>
</dbReference>
<dbReference type="PANTHER" id="PTHR31356">
    <property type="entry name" value="THYLAKOID LUMENAL 29 KDA PROTEIN, CHLOROPLASTIC-RELATED"/>
    <property type="match status" value="1"/>
</dbReference>
<dbReference type="Pfam" id="PF00141">
    <property type="entry name" value="peroxidase"/>
    <property type="match status" value="1"/>
</dbReference>
<dbReference type="Pfam" id="PF11895">
    <property type="entry name" value="Peroxidase_ext"/>
    <property type="match status" value="1"/>
</dbReference>
<dbReference type="PRINTS" id="PR00462">
    <property type="entry name" value="LIGNINASE"/>
</dbReference>
<dbReference type="PRINTS" id="PR00458">
    <property type="entry name" value="PEROXIDASE"/>
</dbReference>
<dbReference type="SUPFAM" id="SSF48113">
    <property type="entry name" value="Heme-dependent peroxidases"/>
    <property type="match status" value="1"/>
</dbReference>
<dbReference type="PROSITE" id="PS00435">
    <property type="entry name" value="PEROXIDASE_1"/>
    <property type="match status" value="1"/>
</dbReference>
<dbReference type="PROSITE" id="PS00436">
    <property type="entry name" value="PEROXIDASE_2"/>
    <property type="match status" value="1"/>
</dbReference>
<dbReference type="PROSITE" id="PS50873">
    <property type="entry name" value="PEROXIDASE_4"/>
    <property type="match status" value="1"/>
</dbReference>
<organism>
    <name type="scientific">Phanerodontia chrysosporium</name>
    <name type="common">White-rot fungus</name>
    <name type="synonym">Sporotrichum pruinosum</name>
    <dbReference type="NCBI Taxonomy" id="2822231"/>
    <lineage>
        <taxon>Eukaryota</taxon>
        <taxon>Fungi</taxon>
        <taxon>Dikarya</taxon>
        <taxon>Basidiomycota</taxon>
        <taxon>Agaricomycotina</taxon>
        <taxon>Agaricomycetes</taxon>
        <taxon>Polyporales</taxon>
        <taxon>Phanerochaetaceae</taxon>
        <taxon>Phanerodontia</taxon>
    </lineage>
</organism>
<protein>
    <recommendedName>
        <fullName>Ligninase H2</fullName>
        <ecNumber evidence="4">1.11.1.14</ecNumber>
    </recommendedName>
    <alternativeName>
        <fullName>Diarylpropane peroxidase</fullName>
    </alternativeName>
    <alternativeName>
        <fullName>LG4</fullName>
    </alternativeName>
    <alternativeName>
        <fullName>Lignin peroxidase</fullName>
    </alternativeName>
</protein>